<proteinExistence type="inferred from homology"/>
<accession>Q8E5V7</accession>
<dbReference type="EC" id="2.7.7.27" evidence="1"/>
<dbReference type="EMBL" id="AL766847">
    <property type="protein sequence ID" value="CAD46516.1"/>
    <property type="molecule type" value="Genomic_DNA"/>
</dbReference>
<dbReference type="RefSeq" id="WP_000787289.1">
    <property type="nucleotide sequence ID" value="NC_004368.1"/>
</dbReference>
<dbReference type="SMR" id="Q8E5V7"/>
<dbReference type="KEGG" id="san:gbs0872"/>
<dbReference type="eggNOG" id="COG0448">
    <property type="taxonomic scope" value="Bacteria"/>
</dbReference>
<dbReference type="HOGENOM" id="CLU_029499_14_0_9"/>
<dbReference type="UniPathway" id="UPA00164"/>
<dbReference type="Proteomes" id="UP000000823">
    <property type="component" value="Chromosome"/>
</dbReference>
<dbReference type="GO" id="GO:0005524">
    <property type="term" value="F:ATP binding"/>
    <property type="evidence" value="ECO:0007669"/>
    <property type="project" value="UniProtKB-KW"/>
</dbReference>
<dbReference type="GO" id="GO:0008878">
    <property type="term" value="F:glucose-1-phosphate adenylyltransferase activity"/>
    <property type="evidence" value="ECO:0007669"/>
    <property type="project" value="UniProtKB-UniRule"/>
</dbReference>
<dbReference type="GO" id="GO:0005978">
    <property type="term" value="P:glycogen biosynthetic process"/>
    <property type="evidence" value="ECO:0007669"/>
    <property type="project" value="UniProtKB-UniRule"/>
</dbReference>
<dbReference type="CDD" id="cd02508">
    <property type="entry name" value="ADP_Glucose_PP"/>
    <property type="match status" value="1"/>
</dbReference>
<dbReference type="CDD" id="cd04651">
    <property type="entry name" value="LbH_G1P_AT_C"/>
    <property type="match status" value="1"/>
</dbReference>
<dbReference type="Gene3D" id="2.160.10.10">
    <property type="entry name" value="Hexapeptide repeat proteins"/>
    <property type="match status" value="1"/>
</dbReference>
<dbReference type="Gene3D" id="3.90.550.10">
    <property type="entry name" value="Spore Coat Polysaccharide Biosynthesis Protein SpsA, Chain A"/>
    <property type="match status" value="1"/>
</dbReference>
<dbReference type="HAMAP" id="MF_00624">
    <property type="entry name" value="GlgC"/>
    <property type="match status" value="1"/>
</dbReference>
<dbReference type="InterPro" id="IPR011831">
    <property type="entry name" value="ADP-Glc_PPase"/>
</dbReference>
<dbReference type="InterPro" id="IPR005836">
    <property type="entry name" value="ADP_Glu_pyroP_CS"/>
</dbReference>
<dbReference type="InterPro" id="IPR023049">
    <property type="entry name" value="GlgC_bac"/>
</dbReference>
<dbReference type="InterPro" id="IPR056818">
    <property type="entry name" value="GlmU/GlgC-like_hexapep"/>
</dbReference>
<dbReference type="InterPro" id="IPR005835">
    <property type="entry name" value="NTP_transferase_dom"/>
</dbReference>
<dbReference type="InterPro" id="IPR029044">
    <property type="entry name" value="Nucleotide-diphossugar_trans"/>
</dbReference>
<dbReference type="InterPro" id="IPR011004">
    <property type="entry name" value="Trimer_LpxA-like_sf"/>
</dbReference>
<dbReference type="NCBIfam" id="TIGR02091">
    <property type="entry name" value="glgC"/>
    <property type="match status" value="1"/>
</dbReference>
<dbReference type="NCBIfam" id="NF003670">
    <property type="entry name" value="PRK05293.1"/>
    <property type="match status" value="1"/>
</dbReference>
<dbReference type="PANTHER" id="PTHR43523:SF2">
    <property type="entry name" value="GLUCOSE-1-PHOSPHATE ADENYLYLTRANSFERASE"/>
    <property type="match status" value="1"/>
</dbReference>
<dbReference type="PANTHER" id="PTHR43523">
    <property type="entry name" value="GLUCOSE-1-PHOSPHATE ADENYLYLTRANSFERASE-RELATED"/>
    <property type="match status" value="1"/>
</dbReference>
<dbReference type="Pfam" id="PF24894">
    <property type="entry name" value="Hexapep_GlmU"/>
    <property type="match status" value="1"/>
</dbReference>
<dbReference type="Pfam" id="PF00483">
    <property type="entry name" value="NTP_transferase"/>
    <property type="match status" value="1"/>
</dbReference>
<dbReference type="SUPFAM" id="SSF53448">
    <property type="entry name" value="Nucleotide-diphospho-sugar transferases"/>
    <property type="match status" value="1"/>
</dbReference>
<dbReference type="SUPFAM" id="SSF51161">
    <property type="entry name" value="Trimeric LpxA-like enzymes"/>
    <property type="match status" value="1"/>
</dbReference>
<dbReference type="PROSITE" id="PS00808">
    <property type="entry name" value="ADP_GLC_PYROPHOSPH_1"/>
    <property type="match status" value="1"/>
</dbReference>
<dbReference type="PROSITE" id="PS00809">
    <property type="entry name" value="ADP_GLC_PYROPHOSPH_2"/>
    <property type="match status" value="1"/>
</dbReference>
<dbReference type="PROSITE" id="PS00810">
    <property type="entry name" value="ADP_GLC_PYROPHOSPH_3"/>
    <property type="match status" value="1"/>
</dbReference>
<gene>
    <name evidence="1" type="primary">glgC</name>
    <name type="ordered locus">gbs0872</name>
</gene>
<organism>
    <name type="scientific">Streptococcus agalactiae serotype III (strain NEM316)</name>
    <dbReference type="NCBI Taxonomy" id="211110"/>
    <lineage>
        <taxon>Bacteria</taxon>
        <taxon>Bacillati</taxon>
        <taxon>Bacillota</taxon>
        <taxon>Bacilli</taxon>
        <taxon>Lactobacillales</taxon>
        <taxon>Streptococcaceae</taxon>
        <taxon>Streptococcus</taxon>
    </lineage>
</organism>
<sequence>MKNEMLALILAGGQGTRLGKLTQSIAKPAVQFGGRYRIIDFALSNCANSGINNVGVITQYQPLELNTHIGNGSSWGLDGIDSGVTVLQPYSATEGNRWFQGTSHAIYQNIDYIDRINPEYVLILSGDHIYKMDYDDMLQTHKDNLASLTVAVLDVPLKEASRFGIMNTDSNDRIVEFEEKPEHPKSTKASMGIYIFDWKRLRTVLIDGEKNGIDMSDFGKNVIPAYLESGERVYTYNFDGYWKDVGTIESLWEANMEYIGEDNKLHSRDRSWKIYSKNLIAPPNFMTEDANVKDSLVVDGCFVAGNVEHSILSTNVQVKPNAIIKDSFVMSGATIGEGAKINRAIIGEDAVIGDGVVIDGSKEVEVIGYKEVVGVPNED</sequence>
<reference key="1">
    <citation type="journal article" date="2002" name="Mol. Microbiol.">
        <title>Genome sequence of Streptococcus agalactiae, a pathogen causing invasive neonatal disease.</title>
        <authorList>
            <person name="Glaser P."/>
            <person name="Rusniok C."/>
            <person name="Buchrieser C."/>
            <person name="Chevalier F."/>
            <person name="Frangeul L."/>
            <person name="Msadek T."/>
            <person name="Zouine M."/>
            <person name="Couve E."/>
            <person name="Lalioui L."/>
            <person name="Poyart C."/>
            <person name="Trieu-Cuot P."/>
            <person name="Kunst F."/>
        </authorList>
    </citation>
    <scope>NUCLEOTIDE SEQUENCE [LARGE SCALE GENOMIC DNA]</scope>
    <source>
        <strain>NEM316</strain>
    </source>
</reference>
<name>GLGC_STRA3</name>
<evidence type="ECO:0000255" key="1">
    <source>
        <dbReference type="HAMAP-Rule" id="MF_00624"/>
    </source>
</evidence>
<comment type="function">
    <text evidence="1">Involved in the biosynthesis of ADP-glucose, a building block required for the elongation reactions to produce glycogen. Catalyzes the reaction between ATP and alpha-D-glucose 1-phosphate (G1P) to produce pyrophosphate and ADP-Glc.</text>
</comment>
<comment type="catalytic activity">
    <reaction evidence="1">
        <text>alpha-D-glucose 1-phosphate + ATP + H(+) = ADP-alpha-D-glucose + diphosphate</text>
        <dbReference type="Rhea" id="RHEA:12120"/>
        <dbReference type="ChEBI" id="CHEBI:15378"/>
        <dbReference type="ChEBI" id="CHEBI:30616"/>
        <dbReference type="ChEBI" id="CHEBI:33019"/>
        <dbReference type="ChEBI" id="CHEBI:57498"/>
        <dbReference type="ChEBI" id="CHEBI:58601"/>
        <dbReference type="EC" id="2.7.7.27"/>
    </reaction>
</comment>
<comment type="pathway">
    <text evidence="1">Glycan biosynthesis; glycogen biosynthesis.</text>
</comment>
<comment type="subunit">
    <text evidence="1">Homotetramer.</text>
</comment>
<comment type="similarity">
    <text evidence="1">Belongs to the bacterial/plant glucose-1-phosphate adenylyltransferase family.</text>
</comment>
<keyword id="KW-0067">ATP-binding</keyword>
<keyword id="KW-0119">Carbohydrate metabolism</keyword>
<keyword id="KW-0320">Glycogen biosynthesis</keyword>
<keyword id="KW-0321">Glycogen metabolism</keyword>
<keyword id="KW-0547">Nucleotide-binding</keyword>
<keyword id="KW-0548">Nucleotidyltransferase</keyword>
<keyword id="KW-0808">Transferase</keyword>
<feature type="chain" id="PRO_0000195330" description="Glucose-1-phosphate adenylyltransferase">
    <location>
        <begin position="1"/>
        <end position="379"/>
    </location>
</feature>
<feature type="binding site" evidence="1">
    <location>
        <position position="164"/>
    </location>
    <ligand>
        <name>alpha-D-glucose 1-phosphate</name>
        <dbReference type="ChEBI" id="CHEBI:58601"/>
    </ligand>
</feature>
<feature type="binding site" evidence="1">
    <location>
        <begin position="179"/>
        <end position="180"/>
    </location>
    <ligand>
        <name>alpha-D-glucose 1-phosphate</name>
        <dbReference type="ChEBI" id="CHEBI:58601"/>
    </ligand>
</feature>
<feature type="binding site" evidence="1">
    <location>
        <position position="190"/>
    </location>
    <ligand>
        <name>alpha-D-glucose 1-phosphate</name>
        <dbReference type="ChEBI" id="CHEBI:58601"/>
    </ligand>
</feature>
<protein>
    <recommendedName>
        <fullName evidence="1">Glucose-1-phosphate adenylyltransferase</fullName>
        <ecNumber evidence="1">2.7.7.27</ecNumber>
    </recommendedName>
    <alternativeName>
        <fullName evidence="1">ADP-glucose pyrophosphorylase</fullName>
        <shortName evidence="1">ADPGlc PPase</shortName>
    </alternativeName>
    <alternativeName>
        <fullName evidence="1">ADP-glucose synthase</fullName>
    </alternativeName>
</protein>